<accession>P15158</accession>
<protein>
    <recommendedName>
        <fullName>Capsid protein</fullName>
    </recommendedName>
    <alternativeName>
        <fullName>Coat protein</fullName>
    </alternativeName>
    <alternativeName>
        <fullName>Virion protein</fullName>
    </alternativeName>
</protein>
<proteinExistence type="evidence at protein level"/>
<comment type="function">
    <text evidence="1">Self-assembles to form a T=3 icosahedral capsid composed of 180 copies of the capsid protein. The capsid encapsulates the single-stranded RNA genome.</text>
</comment>
<comment type="subcellular location">
    <subcellularLocation>
        <location evidence="1">Virion</location>
    </subcellularLocation>
</comment>
<comment type="similarity">
    <text evidence="3">Belongs to the tymoviruses capsid protein family.</text>
</comment>
<evidence type="ECO:0000250" key="1">
    <source>
        <dbReference type="UniProtKB" id="P20125"/>
    </source>
</evidence>
<evidence type="ECO:0000269" key="2">
    <source>
    </source>
</evidence>
<evidence type="ECO:0000305" key="3"/>
<feature type="chain" id="PRO_0000222924" description="Capsid protein">
    <location>
        <begin position="1"/>
        <end position="190"/>
    </location>
</feature>
<feature type="modified residue" description="N-acetylmethionine; by host" evidence="2">
    <location>
        <position position="1"/>
    </location>
</feature>
<feature type="sequence conflict" description="In Ref. 2; AA sequence." evidence="3" ref="2">
    <original>R</original>
    <variation>K</variation>
    <location>
        <position position="179"/>
    </location>
</feature>
<feature type="sequence conflict" description="In Ref. 2; AA sequence." evidence="3" ref="2">
    <original>KPM</original>
    <variation>SPQ</variation>
    <location>
        <begin position="184"/>
        <end position="186"/>
    </location>
</feature>
<organismHost>
    <name type="scientific">Atropa belladonna</name>
    <name type="common">Belladonna</name>
    <name type="synonym">Deadly nightshade</name>
    <dbReference type="NCBI Taxonomy" id="33113"/>
</organismHost>
<keyword id="KW-0007">Acetylation</keyword>
<keyword id="KW-0167">Capsid protein</keyword>
<keyword id="KW-0903">Direct protein sequencing</keyword>
<keyword id="KW-1142">T=3 icosahedral capsid protein</keyword>
<keyword id="KW-0946">Virion</keyword>
<sequence>MDSSEVVKVKQASIPAPGSILSQPNTEQSPAIVLPFQFEATTFGTAETAAQVSLQTADPITKLTAPYRHAQIVECKAILTPTDLAVSNPLTVYLAWVPANSPATPTQILKLRVYGGQSFVLGGAISAAKTIEVPLNLDSVNRMLKDSVTYTDTPKLLAYSRAPTNPSKIPTASIQISGRIRLSKPMLIAN</sequence>
<organism>
    <name type="scientific">Belladonna mottle virus</name>
    <name type="common">BMDV</name>
    <dbReference type="NCBI Taxonomy" id="12149"/>
    <lineage>
        <taxon>Viruses</taxon>
        <taxon>Riboviria</taxon>
        <taxon>Orthornavirae</taxon>
        <taxon>Kitrinoviricota</taxon>
        <taxon>Alsuviricetes</taxon>
        <taxon>Tymovirales</taxon>
        <taxon>Tymoviridae</taxon>
        <taxon>Tymovirus</taxon>
        <taxon>Tymovirus belladonnae</taxon>
    </lineage>
</organism>
<reference key="1">
    <citation type="journal article" date="1989" name="J. Biol. Chem.">
        <title>Primary structure of belladonna mottle virus coat protein.</title>
        <authorList>
            <person name="Suryanarayana S."/>
            <person name="Rao N.A."/>
            <person name="Murthy M.R.N."/>
            <person name="Savithri H.S."/>
        </authorList>
    </citation>
    <scope>PROTEIN SEQUENCE</scope>
    <scope>ACETYLATION AT MET-1</scope>
</reference>
<reference key="2">
    <citation type="journal article" date="1987" name="Biochem. Int.">
        <title>Partial amino acid sequence of belladonna mottle virus coat protein.</title>
        <authorList>
            <person name="Suryanarayana S."/>
            <person name="Rao D.R."/>
            <person name="Rao N.A."/>
            <person name="Savithri H.S."/>
        </authorList>
    </citation>
    <scope>PROTEIN SEQUENCE OF 144-186</scope>
</reference>
<name>CAPSD_BMDV</name>
<dbReference type="PIR" id="S02207">
    <property type="entry name" value="S02207"/>
</dbReference>
<dbReference type="PIR" id="S41553">
    <property type="entry name" value="S41553"/>
</dbReference>
<dbReference type="SMR" id="P15158"/>
<dbReference type="iPTMnet" id="P15158"/>
<dbReference type="GO" id="GO:0039617">
    <property type="term" value="C:T=3 icosahedral viral capsid"/>
    <property type="evidence" value="ECO:0007669"/>
    <property type="project" value="UniProtKB-KW"/>
</dbReference>
<dbReference type="GO" id="GO:0005198">
    <property type="term" value="F:structural molecule activity"/>
    <property type="evidence" value="ECO:0007669"/>
    <property type="project" value="InterPro"/>
</dbReference>
<dbReference type="Gene3D" id="2.60.120.20">
    <property type="match status" value="1"/>
</dbReference>
<dbReference type="InterPro" id="IPR000574">
    <property type="entry name" value="Tymo_coat"/>
</dbReference>
<dbReference type="InterPro" id="IPR029053">
    <property type="entry name" value="Viral_coat"/>
</dbReference>
<dbReference type="Pfam" id="PF00983">
    <property type="entry name" value="Tymo_coat"/>
    <property type="match status" value="1"/>
</dbReference>
<dbReference type="SUPFAM" id="SSF88633">
    <property type="entry name" value="Positive stranded ssRNA viruses"/>
    <property type="match status" value="1"/>
</dbReference>